<protein>
    <recommendedName>
        <fullName>ABC transporter C family member 13</fullName>
        <shortName>ABC transporter ABCC.13</shortName>
        <shortName>AtABCC13</shortName>
        <ecNumber>7.6.2.2</ecNumber>
    </recommendedName>
    <alternativeName>
        <fullName>ATP-energized glutathione S-conjugate pump 11</fullName>
    </alternativeName>
    <alternativeName>
        <fullName>Glutathione S-conjugate-transporting ATPase 11</fullName>
    </alternativeName>
    <alternativeName>
        <fullName>Multidrug resistance-associated protein 11</fullName>
    </alternativeName>
</protein>
<keyword id="KW-0067">ATP-binding</keyword>
<keyword id="KW-0472">Membrane</keyword>
<keyword id="KW-0547">Nucleotide-binding</keyword>
<keyword id="KW-1185">Reference proteome</keyword>
<keyword id="KW-0677">Repeat</keyword>
<keyword id="KW-1278">Translocase</keyword>
<keyword id="KW-0812">Transmembrane</keyword>
<keyword id="KW-1133">Transmembrane helix</keyword>
<keyword id="KW-0813">Transport</keyword>
<reference key="1">
    <citation type="journal article" date="1999" name="Nature">
        <title>Sequence and analysis of chromosome 2 of the plant Arabidopsis thaliana.</title>
        <authorList>
            <person name="Lin X."/>
            <person name="Kaul S."/>
            <person name="Rounsley S.D."/>
            <person name="Shea T.P."/>
            <person name="Benito M.-I."/>
            <person name="Town C.D."/>
            <person name="Fujii C.Y."/>
            <person name="Mason T.M."/>
            <person name="Bowman C.L."/>
            <person name="Barnstead M.E."/>
            <person name="Feldblyum T.V."/>
            <person name="Buell C.R."/>
            <person name="Ketchum K.A."/>
            <person name="Lee J.J."/>
            <person name="Ronning C.M."/>
            <person name="Koo H.L."/>
            <person name="Moffat K.S."/>
            <person name="Cronin L.A."/>
            <person name="Shen M."/>
            <person name="Pai G."/>
            <person name="Van Aken S."/>
            <person name="Umayam L."/>
            <person name="Tallon L.J."/>
            <person name="Gill J.E."/>
            <person name="Adams M.D."/>
            <person name="Carrera A.J."/>
            <person name="Creasy T.H."/>
            <person name="Goodman H.M."/>
            <person name="Somerville C.R."/>
            <person name="Copenhaver G.P."/>
            <person name="Preuss D."/>
            <person name="Nierman W.C."/>
            <person name="White O."/>
            <person name="Eisen J.A."/>
            <person name="Salzberg S.L."/>
            <person name="Fraser C.M."/>
            <person name="Venter J.C."/>
        </authorList>
    </citation>
    <scope>NUCLEOTIDE SEQUENCE [LARGE SCALE GENOMIC DNA]</scope>
    <source>
        <strain>cv. Columbia</strain>
    </source>
</reference>
<reference key="2">
    <citation type="unpublished observations" date="2010-05">
        <authorList>
            <person name="Ducos E."/>
        </authorList>
    </citation>
    <scope>GENE REANNOTATION</scope>
</reference>
<reference key="3">
    <citation type="journal article" date="2017" name="Plant J.">
        <title>Araport11: a complete reannotation of the Arabidopsis thaliana reference genome.</title>
        <authorList>
            <person name="Cheng C.Y."/>
            <person name="Krishnakumar V."/>
            <person name="Chan A.P."/>
            <person name="Thibaud-Nissen F."/>
            <person name="Schobel S."/>
            <person name="Town C.D."/>
        </authorList>
    </citation>
    <scope>GENOME REANNOTATION</scope>
    <source>
        <strain>cv. Columbia</strain>
    </source>
</reference>
<reference key="4">
    <citation type="journal article" date="2001" name="J. Biol. Chem.">
        <title>The Arabidopsis thaliana ABC protein superfamily, a complete inventory.</title>
        <authorList>
            <person name="Sanchez-Fernandez R."/>
            <person name="Davies T.G."/>
            <person name="Coleman J.O."/>
            <person name="Rea P.A."/>
        </authorList>
    </citation>
    <scope>GENE FAMILY</scope>
    <scope>NOMENCLATURE</scope>
</reference>
<reference key="5">
    <citation type="journal article" date="2002" name="Planta">
        <title>Multifunctionality of plant ABC transporters -- more than just detoxifiers.</title>
        <authorList>
            <person name="Martinoia E."/>
            <person name="Klein M."/>
            <person name="Geisler M."/>
            <person name="Bovet L."/>
            <person name="Forestier C."/>
            <person name="Kolukisaoglu H.U."/>
            <person name="Mueller-Roeber B."/>
            <person name="Schulz B."/>
        </authorList>
    </citation>
    <scope>GENE FAMILY</scope>
</reference>
<reference key="6">
    <citation type="journal article" date="2002" name="Planta">
        <title>Family business: the multidrug-resistance related protein (MRP) ABC transporter genes in Arabidopsis thaliana.</title>
        <authorList>
            <person name="Kolukisaoglu U.H."/>
            <person name="Bovet L."/>
            <person name="Klein M."/>
            <person name="Eggmann T."/>
            <person name="Geisler M."/>
            <person name="Wanke D."/>
            <person name="Martinoia E."/>
            <person name="Schulz B."/>
        </authorList>
    </citation>
    <scope>TISSUE SPECIFICITY</scope>
</reference>
<reference key="7">
    <citation type="journal article" date="2008" name="Trends Plant Sci.">
        <title>Plant ABC proteins - a unified nomenclature and updated inventory.</title>
        <authorList>
            <person name="Verrier P.J."/>
            <person name="Bird D."/>
            <person name="Burla B."/>
            <person name="Dassa E."/>
            <person name="Forestier C."/>
            <person name="Geisler M."/>
            <person name="Klein M."/>
            <person name="Kolukisaoglu H.U."/>
            <person name="Lee Y."/>
            <person name="Martinoia E."/>
            <person name="Murphy A."/>
            <person name="Rea P.A."/>
            <person name="Samuels L."/>
            <person name="Schulz B."/>
            <person name="Spalding E.J."/>
            <person name="Yazaki K."/>
            <person name="Theodoulou F.L."/>
        </authorList>
    </citation>
    <scope>GENE FAMILY</scope>
    <scope>NOMENCLATURE</scope>
</reference>
<feature type="chain" id="PRO_0000226082" description="ABC transporter C family member 13">
    <location>
        <begin position="1"/>
        <end position="1410"/>
    </location>
</feature>
<feature type="transmembrane region" description="Helical" evidence="3">
    <location>
        <begin position="23"/>
        <end position="43"/>
    </location>
</feature>
<feature type="transmembrane region" description="Helical" evidence="3">
    <location>
        <begin position="60"/>
        <end position="80"/>
    </location>
</feature>
<feature type="transmembrane region" description="Helical" evidence="3">
    <location>
        <begin position="88"/>
        <end position="108"/>
    </location>
</feature>
<feature type="transmembrane region" description="Helical" evidence="3">
    <location>
        <begin position="122"/>
        <end position="142"/>
    </location>
</feature>
<feature type="transmembrane region" description="Helical" evidence="3">
    <location>
        <begin position="148"/>
        <end position="168"/>
    </location>
</feature>
<feature type="transmembrane region" description="Helical" evidence="3">
    <location>
        <begin position="391"/>
        <end position="411"/>
    </location>
</feature>
<feature type="transmembrane region" description="Helical" evidence="3">
    <location>
        <begin position="474"/>
        <end position="494"/>
    </location>
</feature>
<feature type="transmembrane region" description="Helical" evidence="3">
    <location>
        <begin position="505"/>
        <end position="525"/>
    </location>
</feature>
<feature type="transmembrane region" description="Helical" evidence="3">
    <location>
        <begin position="844"/>
        <end position="864"/>
    </location>
</feature>
<feature type="transmembrane region" description="Helical" evidence="3">
    <location>
        <begin position="889"/>
        <end position="909"/>
    </location>
</feature>
<feature type="transmembrane region" description="Helical" evidence="3">
    <location>
        <begin position="963"/>
        <end position="985"/>
    </location>
</feature>
<feature type="transmembrane region" description="Helical" evidence="3">
    <location>
        <begin position="990"/>
        <end position="1009"/>
    </location>
</feature>
<feature type="transmembrane region" description="Helical" evidence="3">
    <location>
        <begin position="1087"/>
        <end position="1107"/>
    </location>
</feature>
<feature type="transmembrane region" description="Helical" evidence="3">
    <location>
        <begin position="1111"/>
        <end position="1131"/>
    </location>
</feature>
<feature type="domain" description="ABC transmembrane type-1 1" evidence="3">
    <location>
        <begin position="255"/>
        <end position="530"/>
    </location>
</feature>
<feature type="domain" description="ABC transporter 1" evidence="2">
    <location>
        <begin position="564"/>
        <end position="791"/>
    </location>
</feature>
<feature type="domain" description="ABC transmembrane type-1 2" evidence="3">
    <location>
        <begin position="852"/>
        <end position="1139"/>
    </location>
</feature>
<feature type="domain" description="ABC transporter 2" evidence="2">
    <location>
        <begin position="1174"/>
        <end position="1407"/>
    </location>
</feature>
<feature type="binding site" evidence="2">
    <location>
        <begin position="602"/>
        <end position="609"/>
    </location>
    <ligand>
        <name>ATP</name>
        <dbReference type="ChEBI" id="CHEBI:30616"/>
        <label>1</label>
    </ligand>
</feature>
<feature type="binding site" evidence="2">
    <location>
        <begin position="1208"/>
        <end position="1215"/>
    </location>
    <ligand>
        <name>ATP</name>
        <dbReference type="ChEBI" id="CHEBI:30616"/>
        <label>2</label>
    </ligand>
</feature>
<organism>
    <name type="scientific">Arabidopsis thaliana</name>
    <name type="common">Mouse-ear cress</name>
    <dbReference type="NCBI Taxonomy" id="3702"/>
    <lineage>
        <taxon>Eukaryota</taxon>
        <taxon>Viridiplantae</taxon>
        <taxon>Streptophyta</taxon>
        <taxon>Embryophyta</taxon>
        <taxon>Tracheophyta</taxon>
        <taxon>Spermatophyta</taxon>
        <taxon>Magnoliopsida</taxon>
        <taxon>eudicotyledons</taxon>
        <taxon>Gunneridae</taxon>
        <taxon>Pentapetalae</taxon>
        <taxon>rosids</taxon>
        <taxon>malvids</taxon>
        <taxon>Brassicales</taxon>
        <taxon>Brassicaceae</taxon>
        <taxon>Camelineae</taxon>
        <taxon>Arabidopsis</taxon>
    </lineage>
</organism>
<proteinExistence type="evidence at transcript level"/>
<name>AB13C_ARATH</name>
<evidence type="ECO:0000250" key="1"/>
<evidence type="ECO:0000255" key="2">
    <source>
        <dbReference type="PROSITE-ProRule" id="PRU00434"/>
    </source>
</evidence>
<evidence type="ECO:0000255" key="3">
    <source>
        <dbReference type="PROSITE-ProRule" id="PRU00441"/>
    </source>
</evidence>
<evidence type="ECO:0000269" key="4">
    <source>
    </source>
</evidence>
<evidence type="ECO:0000305" key="5"/>
<comment type="function">
    <text evidence="1">Pump for glutathione S-conjugates.</text>
</comment>
<comment type="catalytic activity">
    <reaction>
        <text>ATP + H2O + xenobioticSide 1 = ADP + phosphate + xenobioticSide 2.</text>
        <dbReference type="EC" id="7.6.2.2"/>
    </reaction>
</comment>
<comment type="subcellular location">
    <subcellularLocation>
        <location evidence="3">Membrane</location>
        <topology evidence="3">Multi-pass membrane protein</topology>
    </subcellularLocation>
</comment>
<comment type="tissue specificity">
    <text evidence="4">Ubiquitous.</text>
</comment>
<comment type="similarity">
    <text evidence="5">Belongs to the ABC transporter superfamily. ABCC family. Conjugate transporter (TC 3.A.1.208) subfamily.</text>
</comment>
<comment type="sequence caution" evidence="5">
    <conflict type="erroneous gene model prediction">
        <sequence resource="EMBL-CDS" id="AAD37023"/>
    </conflict>
</comment>
<comment type="sequence caution" evidence="5">
    <conflict type="erroneous gene model prediction">
        <sequence resource="EMBL-CDS" id="AEC06127"/>
    </conflict>
</comment>
<gene>
    <name type="primary">ABCC13</name>
    <name type="synonym">MRP11</name>
    <name type="synonym">MRP13</name>
    <name type="ordered locus">At2g07680</name>
    <name type="ORF">T5E7.1</name>
</gene>
<accession>Q9SKX0</accession>
<accession>F4INF8</accession>
<dbReference type="EC" id="7.6.2.2"/>
<dbReference type="EMBL" id="AC006225">
    <property type="protein sequence ID" value="AAD37023.1"/>
    <property type="status" value="ALT_SEQ"/>
    <property type="molecule type" value="Genomic_DNA"/>
</dbReference>
<dbReference type="EMBL" id="CP002685">
    <property type="protein sequence ID" value="AEC06127.1"/>
    <property type="status" value="ALT_SEQ"/>
    <property type="molecule type" value="Genomic_DNA"/>
</dbReference>
<dbReference type="PIR" id="F84487">
    <property type="entry name" value="F84487"/>
</dbReference>
<dbReference type="RefSeq" id="NP_178811.7">
    <property type="nucleotide sequence ID" value="NM_126770.8"/>
</dbReference>
<dbReference type="SMR" id="Q9SKX0"/>
<dbReference type="FunCoup" id="Q9SKX0">
    <property type="interactions" value="2299"/>
</dbReference>
<dbReference type="STRING" id="3702.Q9SKX0"/>
<dbReference type="GlyGen" id="Q9SKX0">
    <property type="glycosylation" value="1 site"/>
</dbReference>
<dbReference type="PaxDb" id="3702-AT2G07680.1"/>
<dbReference type="ProteomicsDB" id="245144"/>
<dbReference type="GeneID" id="815414"/>
<dbReference type="KEGG" id="ath:AT2G07680"/>
<dbReference type="Araport" id="AT2G07680"/>
<dbReference type="TAIR" id="AT2G07680">
    <property type="gene designation" value="ABCC13"/>
</dbReference>
<dbReference type="eggNOG" id="KOG0054">
    <property type="taxonomic scope" value="Eukaryota"/>
</dbReference>
<dbReference type="HOGENOM" id="CLU_000604_27_1_1"/>
<dbReference type="InParanoid" id="Q9SKX0"/>
<dbReference type="PhylomeDB" id="Q9SKX0"/>
<dbReference type="PRO" id="PR:Q9SKX0"/>
<dbReference type="Proteomes" id="UP000006548">
    <property type="component" value="Chromosome 2"/>
</dbReference>
<dbReference type="ExpressionAtlas" id="Q9SKX0">
    <property type="expression patterns" value="baseline and differential"/>
</dbReference>
<dbReference type="GO" id="GO:0016020">
    <property type="term" value="C:membrane"/>
    <property type="evidence" value="ECO:0000318"/>
    <property type="project" value="GO_Central"/>
</dbReference>
<dbReference type="GO" id="GO:0008559">
    <property type="term" value="F:ABC-type xenobiotic transporter activity"/>
    <property type="evidence" value="ECO:0007669"/>
    <property type="project" value="UniProtKB-EC"/>
</dbReference>
<dbReference type="GO" id="GO:0005524">
    <property type="term" value="F:ATP binding"/>
    <property type="evidence" value="ECO:0007669"/>
    <property type="project" value="UniProtKB-KW"/>
</dbReference>
<dbReference type="GO" id="GO:0016887">
    <property type="term" value="F:ATP hydrolysis activity"/>
    <property type="evidence" value="ECO:0007669"/>
    <property type="project" value="InterPro"/>
</dbReference>
<dbReference type="GO" id="GO:0042626">
    <property type="term" value="F:ATPase-coupled transmembrane transporter activity"/>
    <property type="evidence" value="ECO:0000318"/>
    <property type="project" value="GO_Central"/>
</dbReference>
<dbReference type="GO" id="GO:0055085">
    <property type="term" value="P:transmembrane transport"/>
    <property type="evidence" value="ECO:0000318"/>
    <property type="project" value="GO_Central"/>
</dbReference>
<dbReference type="CDD" id="cd18598">
    <property type="entry name" value="ABC_6TM_MRP7_D1_like"/>
    <property type="match status" value="1"/>
</dbReference>
<dbReference type="CDD" id="cd18605">
    <property type="entry name" value="ABC_6TM_MRP7_D2_like"/>
    <property type="match status" value="1"/>
</dbReference>
<dbReference type="CDD" id="cd03250">
    <property type="entry name" value="ABCC_MRP_domain1"/>
    <property type="match status" value="1"/>
</dbReference>
<dbReference type="CDD" id="cd03244">
    <property type="entry name" value="ABCC_MRP_domain2"/>
    <property type="match status" value="1"/>
</dbReference>
<dbReference type="FunFam" id="1.20.1560.10:FF:000002">
    <property type="entry name" value="ABC transporter C family member 5"/>
    <property type="match status" value="1"/>
</dbReference>
<dbReference type="FunFam" id="3.40.50.300:FF:000630">
    <property type="entry name" value="ATP-binding cassette (ABC) transporter, putative"/>
    <property type="match status" value="1"/>
</dbReference>
<dbReference type="FunFam" id="1.20.1560.10:FF:000037">
    <property type="entry name" value="ATP-binding cassette subfamily C member 10"/>
    <property type="match status" value="1"/>
</dbReference>
<dbReference type="FunFam" id="3.40.50.300:FF:000973">
    <property type="entry name" value="Multidrug resistance-associated protein 4"/>
    <property type="match status" value="1"/>
</dbReference>
<dbReference type="Gene3D" id="1.20.1560.10">
    <property type="entry name" value="ABC transporter type 1, transmembrane domain"/>
    <property type="match status" value="2"/>
</dbReference>
<dbReference type="Gene3D" id="3.40.50.300">
    <property type="entry name" value="P-loop containing nucleotide triphosphate hydrolases"/>
    <property type="match status" value="2"/>
</dbReference>
<dbReference type="InterPro" id="IPR003593">
    <property type="entry name" value="AAA+_ATPase"/>
</dbReference>
<dbReference type="InterPro" id="IPR011527">
    <property type="entry name" value="ABC1_TM_dom"/>
</dbReference>
<dbReference type="InterPro" id="IPR036640">
    <property type="entry name" value="ABC1_TM_sf"/>
</dbReference>
<dbReference type="InterPro" id="IPR003439">
    <property type="entry name" value="ABC_transporter-like_ATP-bd"/>
</dbReference>
<dbReference type="InterPro" id="IPR017871">
    <property type="entry name" value="ABC_transporter-like_CS"/>
</dbReference>
<dbReference type="InterPro" id="IPR050173">
    <property type="entry name" value="ABC_transporter_C-like"/>
</dbReference>
<dbReference type="InterPro" id="IPR027417">
    <property type="entry name" value="P-loop_NTPase"/>
</dbReference>
<dbReference type="PANTHER" id="PTHR24223">
    <property type="entry name" value="ATP-BINDING CASSETTE SUB-FAMILY C"/>
    <property type="match status" value="1"/>
</dbReference>
<dbReference type="PANTHER" id="PTHR24223:SF330">
    <property type="entry name" value="ATP-BINDING CASSETTE SUB-FAMILY C MEMBER 10"/>
    <property type="match status" value="1"/>
</dbReference>
<dbReference type="Pfam" id="PF00664">
    <property type="entry name" value="ABC_membrane"/>
    <property type="match status" value="2"/>
</dbReference>
<dbReference type="Pfam" id="PF00005">
    <property type="entry name" value="ABC_tran"/>
    <property type="match status" value="2"/>
</dbReference>
<dbReference type="SMART" id="SM00382">
    <property type="entry name" value="AAA"/>
    <property type="match status" value="2"/>
</dbReference>
<dbReference type="SUPFAM" id="SSF90123">
    <property type="entry name" value="ABC transporter transmembrane region"/>
    <property type="match status" value="2"/>
</dbReference>
<dbReference type="SUPFAM" id="SSF52540">
    <property type="entry name" value="P-loop containing nucleoside triphosphate hydrolases"/>
    <property type="match status" value="2"/>
</dbReference>
<dbReference type="PROSITE" id="PS50929">
    <property type="entry name" value="ABC_TM1F"/>
    <property type="match status" value="2"/>
</dbReference>
<dbReference type="PROSITE" id="PS00211">
    <property type="entry name" value="ABC_TRANSPORTER_1"/>
    <property type="match status" value="2"/>
</dbReference>
<dbReference type="PROSITE" id="PS50893">
    <property type="entry name" value="ABC_TRANSPORTER_2"/>
    <property type="match status" value="2"/>
</dbReference>
<sequence>MAITLTNFTFLYMDANLKRLGDIVLGFGANVVTLLLILILTITRRNGRCNRRKSYIEKCLLYVTPALGACLSCVDLVLLVRTNRRREVILCFVPLSGFVMWIAVILSLKFACCACHVFTSQILCFWWIFRFLTDALHLNMIFTLQRVQEICLIMLDIAFGISINVLRIKQAHPKIIPLEDPLIEDDDDQKRIVRRLFLEKNGSWWDLFTFGYIGSIMKHGSVKQLELENLLTLPPEMDPFTCCENLLRCWQLQECNNYSTPSLIWSIYGVYGWPYFRLGLLKVFNDCIGFAGPLLLNRLIKSFLDTQYTFRLSKLKLKLRSSIMSVIYRKCLWVNTANRSGFSEGEIQTFMSVDADRIVNLCNSLHDLWSLPLQIGIALYLLYTQVKFAFLSGLAITILLIPVNKWISVLIASATEKMMKLKDERIRKTGELLTNIRTLKMYGWDNWFADWLKETRATEVTHLATRKYLDAWCVFFWATTPTLFSLCTFGLFALMGHQLDAATVFTCLALFNSLISPLNSFPWVINGLIDAFISTRRVSKFLCCLEHSRDFSIDSGFTSEDLAVCVEDASCTWSSNVEEDYNLTIKQVSLRVPKGSFVAVIGEVGSGKTSLLNSLLGEMRCVHGSILLNGSVAYVPQVPWLLSGTVRENILFGKPFDSKRYFETLSACALDVDISLMVGGDMACIGDKGLNLSGGQRARFALARAVYHGSDMYLLDDVLSAVDSQVGCWILQRALLGPLLNKKTRVMCTHNIQAISCADMIVVMDKGKVNWSGSVTDMPKSISPTFSLTNEFDMSSPNHLTKRKETLSIKEDGVDEISEAAADIVKLEERKEGRVEMMVYRNYAVFSGWFITIVILVSAVLMQGSRNGNDLWLSYWVDKTGKGVSHYSTSFYLMVLCIFCIINSILTLVRAFSFAFGGLKAAVHVHNALISKLINAPTQFFDQTPSGRILNRFSSDLYTIDDSLPFILNILLANFVGLLGIIVVLSYVQVLFLLLLLPFWYIYSKLQVFYRSTSRELRRLDSVSRSPIYASFTETLDGSSTIRAFKSEEHFVGRFIEHLTLYQRTSYSEIIASLWLSLRLQLLGSMIVLFVAVMAVLGSGGNFPISFGTPGLVGLALSYAAPLVSLLGSLLTSFTETEKEMVSVERVLQYMDVPQEEVSGPQSLSDKWPVHGLVEFHNVTMRYISTLPPALTQISFTIQGGMHVGVIGRTGAGKSSILNALFRLTPVCSGEILVDGKNISHLPIRELRSCLAVVPQSPFLFQGSLRDNLDPLGLSEDWRIWEILDKCKVKAAVESVGGLDSYVKESGCSFSVGQRQLLCLARALLKSSKILCLDECTANIDVHTASLLHNTISSECKGVTVITIAHRISTVVDLDSILILDRGILVEQGKPQHLLQDDSSTFSSFVRASQ</sequence>